<name>HAK7_ORYSJ</name>
<proteinExistence type="evidence at transcript level"/>
<comment type="function">
    <text evidence="3">High-affinity potassium transporter.</text>
</comment>
<comment type="subcellular location">
    <subcellularLocation>
        <location evidence="5">Membrane</location>
        <topology evidence="5">Multi-pass membrane protein</topology>
    </subcellularLocation>
</comment>
<comment type="alternative products">
    <event type="alternative splicing"/>
    <isoform>
        <id>Q8H3P9-1</id>
        <name>1</name>
        <sequence type="displayed"/>
    </isoform>
    <isoform>
        <id>Q8H3P9-2</id>
        <name>2</name>
        <sequence type="described" ref="VSP_037671 VSP_037672"/>
    </isoform>
</comment>
<comment type="tissue specificity">
    <text evidence="3">Expressed in roots and shoots.</text>
</comment>
<comment type="induction">
    <text evidence="3">By potassium starvation in both roots and shoots of young seedlings.</text>
</comment>
<comment type="similarity">
    <text evidence="5">Belongs to the HAK/KUP transporter (TC 2.A.72.3) family.</text>
</comment>
<comment type="sequence caution" evidence="5">
    <conflict type="erroneous gene model prediction">
        <sequence resource="EMBL-CDS" id="BAC83599"/>
    </conflict>
</comment>
<gene>
    <name type="primary">HAK7</name>
    <name type="ordered locus">Os07g0669700</name>
    <name type="ordered locus">LOC_Os07g47350</name>
    <name type="ORF">P0625E02.129</name>
</gene>
<keyword id="KW-0025">Alternative splicing</keyword>
<keyword id="KW-0325">Glycoprotein</keyword>
<keyword id="KW-0406">Ion transport</keyword>
<keyword id="KW-0472">Membrane</keyword>
<keyword id="KW-0630">Potassium</keyword>
<keyword id="KW-0633">Potassium transport</keyword>
<keyword id="KW-1185">Reference proteome</keyword>
<keyword id="KW-0812">Transmembrane</keyword>
<keyword id="KW-1133">Transmembrane helix</keyword>
<keyword id="KW-0813">Transport</keyword>
<evidence type="ECO:0000255" key="1"/>
<evidence type="ECO:0000256" key="2">
    <source>
        <dbReference type="SAM" id="MobiDB-lite"/>
    </source>
</evidence>
<evidence type="ECO:0000269" key="3">
    <source>
    </source>
</evidence>
<evidence type="ECO:0000303" key="4">
    <source>
    </source>
</evidence>
<evidence type="ECO:0000305" key="5"/>
<protein>
    <recommendedName>
        <fullName>Potassium transporter 7</fullName>
    </recommendedName>
    <alternativeName>
        <fullName>OsHAK7</fullName>
    </alternativeName>
</protein>
<organism>
    <name type="scientific">Oryza sativa subsp. japonica</name>
    <name type="common">Rice</name>
    <dbReference type="NCBI Taxonomy" id="39947"/>
    <lineage>
        <taxon>Eukaryota</taxon>
        <taxon>Viridiplantae</taxon>
        <taxon>Streptophyta</taxon>
        <taxon>Embryophyta</taxon>
        <taxon>Tracheophyta</taxon>
        <taxon>Spermatophyta</taxon>
        <taxon>Magnoliopsida</taxon>
        <taxon>Liliopsida</taxon>
        <taxon>Poales</taxon>
        <taxon>Poaceae</taxon>
        <taxon>BOP clade</taxon>
        <taxon>Oryzoideae</taxon>
        <taxon>Oryzeae</taxon>
        <taxon>Oryzinae</taxon>
        <taxon>Oryza</taxon>
        <taxon>Oryza sativa</taxon>
    </lineage>
</organism>
<accession>Q8H3P9</accession>
<accession>Q0D3S0</accession>
<accession>Q8VWK2</accession>
<feature type="chain" id="PRO_0000209094" description="Potassium transporter 7">
    <location>
        <begin position="1"/>
        <end position="811"/>
    </location>
</feature>
<feature type="topological domain" description="Cytoplasmic" evidence="1">
    <location>
        <begin position="1"/>
        <end position="52"/>
    </location>
</feature>
<feature type="transmembrane region" description="Helical; Name=1" evidence="1">
    <location>
        <begin position="53"/>
        <end position="73"/>
    </location>
</feature>
<feature type="topological domain" description="Extracellular" evidence="1">
    <location>
        <begin position="74"/>
        <end position="93"/>
    </location>
</feature>
<feature type="transmembrane region" description="Helical; Name=2" evidence="1">
    <location>
        <begin position="94"/>
        <end position="114"/>
    </location>
</feature>
<feature type="topological domain" description="Cytoplasmic" evidence="1">
    <location>
        <begin position="115"/>
        <end position="181"/>
    </location>
</feature>
<feature type="transmembrane region" description="Helical; Name=3" evidence="1">
    <location>
        <begin position="182"/>
        <end position="202"/>
    </location>
</feature>
<feature type="topological domain" description="Extracellular" evidence="1">
    <location>
        <begin position="203"/>
        <end position="217"/>
    </location>
</feature>
<feature type="transmembrane region" description="Helical; Name=4" evidence="1">
    <location>
        <begin position="218"/>
        <end position="238"/>
    </location>
</feature>
<feature type="topological domain" description="Cytoplasmic" evidence="1">
    <location>
        <begin position="239"/>
        <end position="245"/>
    </location>
</feature>
<feature type="transmembrane region" description="Helical; Name=5" evidence="1">
    <location>
        <begin position="246"/>
        <end position="266"/>
    </location>
</feature>
<feature type="topological domain" description="Extracellular" evidence="1">
    <location>
        <begin position="267"/>
        <end position="296"/>
    </location>
</feature>
<feature type="transmembrane region" description="Helical; Name=6" evidence="1">
    <location>
        <begin position="297"/>
        <end position="317"/>
    </location>
</feature>
<feature type="topological domain" description="Cytoplasmic" evidence="1">
    <location>
        <begin position="318"/>
        <end position="326"/>
    </location>
</feature>
<feature type="transmembrane region" description="Helical; Name=7" evidence="1">
    <location>
        <begin position="327"/>
        <end position="347"/>
    </location>
</feature>
<feature type="topological domain" description="Extracellular" evidence="1">
    <location>
        <begin position="348"/>
        <end position="366"/>
    </location>
</feature>
<feature type="transmembrane region" description="Helical; Name=8" evidence="1">
    <location>
        <begin position="367"/>
        <end position="387"/>
    </location>
</feature>
<feature type="topological domain" description="Cytoplasmic" evidence="1">
    <location>
        <begin position="388"/>
        <end position="418"/>
    </location>
</feature>
<feature type="transmembrane region" description="Helical; Name=9" evidence="1">
    <location>
        <begin position="419"/>
        <end position="439"/>
    </location>
</feature>
<feature type="topological domain" description="Extracellular" evidence="1">
    <location>
        <begin position="440"/>
        <end position="450"/>
    </location>
</feature>
<feature type="transmembrane region" description="Helical; Name=10" evidence="1">
    <location>
        <begin position="451"/>
        <end position="471"/>
    </location>
</feature>
<feature type="topological domain" description="Cytoplasmic" evidence="1">
    <location>
        <begin position="472"/>
        <end position="475"/>
    </location>
</feature>
<feature type="transmembrane region" description="Helical; Name=11" evidence="1">
    <location>
        <begin position="476"/>
        <end position="496"/>
    </location>
</feature>
<feature type="topological domain" description="Extracellular" evidence="1">
    <location>
        <begin position="497"/>
        <end position="503"/>
    </location>
</feature>
<feature type="transmembrane region" description="Helical; Name=12" evidence="1">
    <location>
        <begin position="504"/>
        <end position="524"/>
    </location>
</feature>
<feature type="topological domain" description="Cytoplasmic" evidence="1">
    <location>
        <begin position="525"/>
        <end position="811"/>
    </location>
</feature>
<feature type="region of interest" description="Disordered" evidence="2">
    <location>
        <begin position="680"/>
        <end position="702"/>
    </location>
</feature>
<feature type="glycosylation site" description="N-linked (GlcNAc...) asparagine" evidence="1">
    <location>
        <position position="351"/>
    </location>
</feature>
<feature type="splice variant" id="VSP_037671" description="In isoform 2." evidence="4">
    <location>
        <begin position="1"/>
        <end position="30"/>
    </location>
</feature>
<feature type="splice variant" id="VSP_037672" description="In isoform 2." evidence="4">
    <original>RVGVLMIVLL</original>
    <variation>MDAETGPAAP</variation>
    <location>
        <begin position="31"/>
        <end position="40"/>
    </location>
</feature>
<feature type="sequence conflict" description="In Ref. 5; AK100652." evidence="5" ref="5">
    <original>E</original>
    <variation>G</variation>
    <location>
        <position position="122"/>
    </location>
</feature>
<dbReference type="EMBL" id="AJ427971">
    <property type="protein sequence ID" value="CAD20992.1"/>
    <property type="molecule type" value="mRNA"/>
</dbReference>
<dbReference type="EMBL" id="AJ427976">
    <property type="protein sequence ID" value="CAD20997.1"/>
    <property type="molecule type" value="Genomic_DNA"/>
</dbReference>
<dbReference type="EMBL" id="AP004570">
    <property type="protein sequence ID" value="BAC83599.1"/>
    <property type="status" value="ALT_SEQ"/>
    <property type="molecule type" value="Genomic_DNA"/>
</dbReference>
<dbReference type="EMBL" id="AP008213">
    <property type="protein sequence ID" value="BAF22503.2"/>
    <property type="molecule type" value="Genomic_DNA"/>
</dbReference>
<dbReference type="EMBL" id="AP014963">
    <property type="status" value="NOT_ANNOTATED_CDS"/>
    <property type="molecule type" value="Genomic_DNA"/>
</dbReference>
<dbReference type="EMBL" id="AK100652">
    <property type="status" value="NOT_ANNOTATED_CDS"/>
    <property type="molecule type" value="mRNA"/>
</dbReference>
<dbReference type="RefSeq" id="XP_015646990.1">
    <property type="nucleotide sequence ID" value="XM_015791504.1"/>
</dbReference>
<dbReference type="RefSeq" id="XP_015646991.1">
    <property type="nucleotide sequence ID" value="XM_015791505.1"/>
</dbReference>
<dbReference type="FunCoup" id="Q8H3P9">
    <property type="interactions" value="107"/>
</dbReference>
<dbReference type="STRING" id="39947.Q8H3P9"/>
<dbReference type="GlyCosmos" id="Q8H3P9">
    <property type="glycosylation" value="1 site, No reported glycans"/>
</dbReference>
<dbReference type="PaxDb" id="39947-Q8H3P9"/>
<dbReference type="KEGG" id="dosa:Os07g0669700"/>
<dbReference type="eggNOG" id="ENOG502QPSA">
    <property type="taxonomic scope" value="Eukaryota"/>
</dbReference>
<dbReference type="InParanoid" id="Q8H3P9"/>
<dbReference type="OrthoDB" id="504708at2759"/>
<dbReference type="BioCyc" id="MetaCyc:MONOMER-14581"/>
<dbReference type="Proteomes" id="UP000000763">
    <property type="component" value="Chromosome 7"/>
</dbReference>
<dbReference type="Proteomes" id="UP000059680">
    <property type="component" value="Chromosome 7"/>
</dbReference>
<dbReference type="GO" id="GO:0016020">
    <property type="term" value="C:membrane"/>
    <property type="evidence" value="ECO:0000318"/>
    <property type="project" value="GO_Central"/>
</dbReference>
<dbReference type="GO" id="GO:0015079">
    <property type="term" value="F:potassium ion transmembrane transporter activity"/>
    <property type="evidence" value="ECO:0000318"/>
    <property type="project" value="GO_Central"/>
</dbReference>
<dbReference type="GO" id="GO:0006813">
    <property type="term" value="P:potassium ion transport"/>
    <property type="evidence" value="ECO:0000318"/>
    <property type="project" value="GO_Central"/>
</dbReference>
<dbReference type="CDD" id="cd01060">
    <property type="entry name" value="Membrane-FADS-like"/>
    <property type="match status" value="1"/>
</dbReference>
<dbReference type="InterPro" id="IPR003855">
    <property type="entry name" value="K+_transporter"/>
</dbReference>
<dbReference type="InterPro" id="IPR053952">
    <property type="entry name" value="K_trans_C"/>
</dbReference>
<dbReference type="InterPro" id="IPR053951">
    <property type="entry name" value="K_trans_N"/>
</dbReference>
<dbReference type="NCBIfam" id="TIGR00794">
    <property type="entry name" value="kup"/>
    <property type="match status" value="1"/>
</dbReference>
<dbReference type="PANTHER" id="PTHR30540">
    <property type="entry name" value="OSMOTIC STRESS POTASSIUM TRANSPORTER"/>
    <property type="match status" value="1"/>
</dbReference>
<dbReference type="PANTHER" id="PTHR30540:SF108">
    <property type="entry name" value="POTASSIUM TRANSPORTER 3"/>
    <property type="match status" value="1"/>
</dbReference>
<dbReference type="Pfam" id="PF02705">
    <property type="entry name" value="K_trans"/>
    <property type="match status" value="1"/>
</dbReference>
<dbReference type="Pfam" id="PF22776">
    <property type="entry name" value="K_trans_C"/>
    <property type="match status" value="1"/>
</dbReference>
<reference key="1">
    <citation type="journal article" date="2002" name="Plant Physiol.">
        <title>Inventory and functional characterization of the HAK potassium transporters of rice.</title>
        <authorList>
            <person name="Banuelos M.A."/>
            <person name="Garciadeblas B."/>
            <person name="Cubero B."/>
            <person name="Rodriguez-Navarro A."/>
        </authorList>
    </citation>
    <scope>NUCLEOTIDE SEQUENCE [GENOMIC DNA / MRNA] (ISOFORM 1)</scope>
    <scope>FUNCTION</scope>
    <scope>TISSUE SPECIFICITY</scope>
    <scope>NOMENCLATURE</scope>
    <scope>INDUCTION</scope>
    <source>
        <strain>cv. Nipponbare</strain>
    </source>
</reference>
<reference key="2">
    <citation type="journal article" date="2005" name="Nature">
        <title>The map-based sequence of the rice genome.</title>
        <authorList>
            <consortium name="International rice genome sequencing project (IRGSP)"/>
        </authorList>
    </citation>
    <scope>NUCLEOTIDE SEQUENCE [LARGE SCALE GENOMIC DNA]</scope>
    <source>
        <strain>cv. Nipponbare</strain>
    </source>
</reference>
<reference key="3">
    <citation type="journal article" date="2008" name="Nucleic Acids Res.">
        <title>The rice annotation project database (RAP-DB): 2008 update.</title>
        <authorList>
            <consortium name="The rice annotation project (RAP)"/>
        </authorList>
    </citation>
    <scope>GENOME REANNOTATION</scope>
    <source>
        <strain>cv. Nipponbare</strain>
    </source>
</reference>
<reference key="4">
    <citation type="journal article" date="2013" name="Rice">
        <title>Improvement of the Oryza sativa Nipponbare reference genome using next generation sequence and optical map data.</title>
        <authorList>
            <person name="Kawahara Y."/>
            <person name="de la Bastide M."/>
            <person name="Hamilton J.P."/>
            <person name="Kanamori H."/>
            <person name="McCombie W.R."/>
            <person name="Ouyang S."/>
            <person name="Schwartz D.C."/>
            <person name="Tanaka T."/>
            <person name="Wu J."/>
            <person name="Zhou S."/>
            <person name="Childs K.L."/>
            <person name="Davidson R.M."/>
            <person name="Lin H."/>
            <person name="Quesada-Ocampo L."/>
            <person name="Vaillancourt B."/>
            <person name="Sakai H."/>
            <person name="Lee S.S."/>
            <person name="Kim J."/>
            <person name="Numa H."/>
            <person name="Itoh T."/>
            <person name="Buell C.R."/>
            <person name="Matsumoto T."/>
        </authorList>
    </citation>
    <scope>GENOME REANNOTATION</scope>
    <source>
        <strain>cv. Nipponbare</strain>
    </source>
</reference>
<reference key="5">
    <citation type="journal article" date="2003" name="Science">
        <title>Collection, mapping, and annotation of over 28,000 cDNA clones from japonica rice.</title>
        <authorList>
            <consortium name="The rice full-length cDNA consortium"/>
        </authorList>
    </citation>
    <scope>NUCLEOTIDE SEQUENCE [LARGE SCALE MRNA] OF 1-529 (ISOFORM 2)</scope>
    <source>
        <strain>cv. Nipponbare</strain>
    </source>
</reference>
<reference key="6">
    <citation type="journal article" date="2009" name="J. Genet. Genomics">
        <title>Molecular evolution and functional divergence of HAK potassium transporter gene family in rice (Oryza sativa L.).</title>
        <authorList>
            <person name="Yang Z."/>
            <person name="Gao Q."/>
            <person name="Sun C."/>
            <person name="Li W."/>
            <person name="Gu S."/>
            <person name="Xu C."/>
        </authorList>
    </citation>
    <scope>GENE FAMILY</scope>
</reference>
<sequence>MPSYQYLLSLLFYILDCTDRFSVIVTIHNHRVGVLMIVLLQDQWKSYCRTISLLAFQSFGVVYGDLSTSPLYVYKSAFSGRLNNYRDETTIFGLFSLIFWTLTLLPLLKYVIIVLNADDNGEGGTFALYSLLCRHAKFSLLPNQQSADEELSTYYQPGVGGIISSPLKRFLEKHRKLRTCLLLFVLFGACMVIGDGVFTPAISVLSAISGLKDPGPGGIPDGWVVFIACIVLVGLFALQHRGTHRVAFMFAPIVVVWLLSIGVIGLYNIIHWNHRIFLALSPHYVIKFFKMTGKDGWLSLGGVLLAITGTEAMFADLGHFTAASIRLAFVGAIYPCLVLQYMGQAAFLSRNMSAVEDSFYQSVPRSLFWPVFVIATLAAVVGSQSIISATFSIVKQCLSLGCFPRVKVVHTSRWIHGQIYIPEINWILMVLCLAVTLGFRDTTVIGNAYGLACIVVMFVTTWLMALVIIFVWQKNILLALLFVVAFGSIEVVYLSAAVTKVPQGGWAPIVFAFVFMLVMYVWHYGSRRKYLFDLQNKVSMKWILTLGPSLGIVRVPGIGLIYTELVTGVPSIFSHFVTNLPAFHQVLVFVCVKSVPVPFVPEDERYLIGRIGPREYRMYRCIVRYGYKDVQKDDENFENHLVMSIAKFIQMEAEEAASSGSYESSEGRMAVIHTEDTTGTGLVMRDSNNEASGTSLTRSSRSETLRSLQSIYEQESGSLSRRRRVRFEIAEEERIDPQVRDELADLLDAKEAGVTYIIGHSYVKARKNSNFLKTFAIDYAYSFLRKNCRGPAVALHIPHISLVEVGMIYYV</sequence>